<evidence type="ECO:0000250" key="1"/>
<evidence type="ECO:0000250" key="2">
    <source>
        <dbReference type="UniProtKB" id="P68137"/>
    </source>
</evidence>
<evidence type="ECO:0000269" key="3">
    <source>
    </source>
</evidence>
<evidence type="ECO:0000305" key="4"/>
<protein>
    <recommendedName>
        <fullName>Actin-4</fullName>
        <ecNumber evidence="2">3.6.4.-</ecNumber>
    </recommendedName>
</protein>
<name>ACT4_CAEEL</name>
<proteinExistence type="inferred from homology"/>
<comment type="function">
    <text evidence="3">Actins are highly conserved proteins that are involved in various types of cell motility and are ubiquitously expressed in all eukaryotic cells.</text>
</comment>
<comment type="catalytic activity">
    <reaction evidence="2">
        <text>ATP + H2O = ADP + phosphate + H(+)</text>
        <dbReference type="Rhea" id="RHEA:13065"/>
        <dbReference type="ChEBI" id="CHEBI:15377"/>
        <dbReference type="ChEBI" id="CHEBI:15378"/>
        <dbReference type="ChEBI" id="CHEBI:30616"/>
        <dbReference type="ChEBI" id="CHEBI:43474"/>
        <dbReference type="ChEBI" id="CHEBI:456216"/>
    </reaction>
</comment>
<comment type="subcellular location">
    <subcellularLocation>
        <location evidence="3">Cytoplasm</location>
        <location evidence="3">Cytoskeleton</location>
    </subcellularLocation>
</comment>
<comment type="miscellaneous">
    <text>In this organism there are four genes coding for actin. The sequences coded by genes 1 and 3 are identical. There are a few variations in the actins coded by genes 2 and 4.</text>
</comment>
<comment type="similarity">
    <text evidence="4">Belongs to the actin family.</text>
</comment>
<reference key="1">
    <citation type="journal article" date="1989" name="J. Mol. Biol.">
        <title>Wild-type and mutant actin genes in Caenorhabditis elegans.</title>
        <authorList>
            <person name="Krause M."/>
            <person name="Wild M."/>
            <person name="Rosenzweig B."/>
            <person name="Hirsh D."/>
        </authorList>
    </citation>
    <scope>NUCLEOTIDE SEQUENCE [GENOMIC DNA]</scope>
    <scope>FUNCTION</scope>
    <scope>SUBCELLULAR LOCATION</scope>
</reference>
<reference key="2">
    <citation type="journal article" date="1998" name="Science">
        <title>Genome sequence of the nematode C. elegans: a platform for investigating biology.</title>
        <authorList>
            <consortium name="The C. elegans sequencing consortium"/>
        </authorList>
    </citation>
    <scope>NUCLEOTIDE SEQUENCE [LARGE SCALE GENOMIC DNA]</scope>
    <source>
        <strain>Bristol N2</strain>
    </source>
</reference>
<reference key="3">
    <citation type="journal article" date="1983" name="J. Mol. Biol.">
        <title>Actin gene family of Caenorhabditis elegans.</title>
        <authorList>
            <person name="Files J.G."/>
            <person name="Carr S."/>
            <person name="Hirsh D."/>
        </authorList>
    </citation>
    <scope>NUCLEOTIDE SEQUENCE [GENOMIC DNA] OF 1-86</scope>
</reference>
<dbReference type="EC" id="3.6.4.-" evidence="2"/>
<dbReference type="EMBL" id="X16799">
    <property type="protein sequence ID" value="CAA34720.1"/>
    <property type="molecule type" value="Genomic_DNA"/>
</dbReference>
<dbReference type="EMBL" id="X16800">
    <property type="protein sequence ID" value="CAA34720.1"/>
    <property type="status" value="JOINED"/>
    <property type="molecule type" value="Genomic_DNA"/>
</dbReference>
<dbReference type="EMBL" id="FO081654">
    <property type="protein sequence ID" value="CCD83476.1"/>
    <property type="molecule type" value="Genomic_DNA"/>
</dbReference>
<dbReference type="EMBL" id="J01046">
    <property type="protein sequence ID" value="AAA27890.1"/>
    <property type="molecule type" value="Genomic_DNA"/>
</dbReference>
<dbReference type="EMBL" id="J01045">
    <property type="protein sequence ID" value="AAA27890.1"/>
    <property type="status" value="JOINED"/>
    <property type="molecule type" value="Genomic_DNA"/>
</dbReference>
<dbReference type="PIR" id="S27135">
    <property type="entry name" value="S27135"/>
</dbReference>
<dbReference type="RefSeq" id="NP_508841.1">
    <property type="nucleotide sequence ID" value="NM_076440.8"/>
</dbReference>
<dbReference type="SMR" id="P10986"/>
<dbReference type="BioGRID" id="45702">
    <property type="interactions" value="24"/>
</dbReference>
<dbReference type="DIP" id="DIP-27204N"/>
<dbReference type="FunCoup" id="P10986">
    <property type="interactions" value="1790"/>
</dbReference>
<dbReference type="IntAct" id="P10986">
    <property type="interactions" value="10"/>
</dbReference>
<dbReference type="STRING" id="6239.M03F4.2a.1"/>
<dbReference type="PaxDb" id="6239-M03F4.2a"/>
<dbReference type="PeptideAtlas" id="P10986"/>
<dbReference type="EnsemblMetazoa" id="M03F4.2a.1">
    <property type="protein sequence ID" value="M03F4.2a.1"/>
    <property type="gene ID" value="WBGene00000066"/>
</dbReference>
<dbReference type="GeneID" id="180767"/>
<dbReference type="KEGG" id="cel:CELE_M03F4.2"/>
<dbReference type="UCSC" id="M03F4.2a">
    <property type="organism name" value="c. elegans"/>
</dbReference>
<dbReference type="AGR" id="WB:WBGene00000066"/>
<dbReference type="CTD" id="180767"/>
<dbReference type="WormBase" id="M03F4.2a">
    <property type="protein sequence ID" value="CE12358"/>
    <property type="gene ID" value="WBGene00000066"/>
    <property type="gene designation" value="act-4"/>
</dbReference>
<dbReference type="eggNOG" id="KOG0676">
    <property type="taxonomic scope" value="Eukaryota"/>
</dbReference>
<dbReference type="InParanoid" id="P10986"/>
<dbReference type="OMA" id="PNIMVGM"/>
<dbReference type="OrthoDB" id="9973372at2759"/>
<dbReference type="PhylomeDB" id="P10986"/>
<dbReference type="Reactome" id="R-CEL-114608">
    <property type="pathway name" value="Platelet degranulation"/>
</dbReference>
<dbReference type="Reactome" id="R-CEL-190873">
    <property type="pathway name" value="Gap junction degradation"/>
</dbReference>
<dbReference type="Reactome" id="R-CEL-196025">
    <property type="pathway name" value="Formation of annular gap junctions"/>
</dbReference>
<dbReference type="Reactome" id="R-CEL-2029482">
    <property type="pathway name" value="Regulation of actin dynamics for phagocytic cup formation"/>
</dbReference>
<dbReference type="Reactome" id="R-CEL-3928662">
    <property type="pathway name" value="EPHB-mediated forward signaling"/>
</dbReference>
<dbReference type="Reactome" id="R-CEL-3928665">
    <property type="pathway name" value="EPH-ephrin mediated repulsion of cells"/>
</dbReference>
<dbReference type="Reactome" id="R-CEL-437239">
    <property type="pathway name" value="Recycling pathway of L1"/>
</dbReference>
<dbReference type="Reactome" id="R-CEL-4420097">
    <property type="pathway name" value="VEGFA-VEGFR2 Pathway"/>
</dbReference>
<dbReference type="Reactome" id="R-CEL-446353">
    <property type="pathway name" value="Cell-extracellular matrix interactions"/>
</dbReference>
<dbReference type="Reactome" id="R-CEL-5626467">
    <property type="pathway name" value="RHO GTPases activate IQGAPs"/>
</dbReference>
<dbReference type="Reactome" id="R-CEL-5663213">
    <property type="pathway name" value="RHO GTPases Activate WASPs and WAVEs"/>
</dbReference>
<dbReference type="Reactome" id="R-CEL-5663220">
    <property type="pathway name" value="RHO GTPases Activate Formins"/>
</dbReference>
<dbReference type="Reactome" id="R-CEL-5674135">
    <property type="pathway name" value="MAP2K and MAPK activation"/>
</dbReference>
<dbReference type="Reactome" id="R-CEL-8856828">
    <property type="pathway name" value="Clathrin-mediated endocytosis"/>
</dbReference>
<dbReference type="Reactome" id="R-CEL-9035034">
    <property type="pathway name" value="RHOF GTPase cycle"/>
</dbReference>
<dbReference type="Reactome" id="R-CEL-9913351">
    <property type="pathway name" value="Formation of the dystrophin-glycoprotein complex (DGC)"/>
</dbReference>
<dbReference type="PRO" id="PR:P10986"/>
<dbReference type="Proteomes" id="UP000001940">
    <property type="component" value="Chromosome X"/>
</dbReference>
<dbReference type="Bgee" id="WBGene00000066">
    <property type="expression patterns" value="Expressed in pharyngeal muscle cell (C elegans) and 4 other cell types or tissues"/>
</dbReference>
<dbReference type="ExpressionAtlas" id="P10986">
    <property type="expression patterns" value="baseline and differential"/>
</dbReference>
<dbReference type="GO" id="GO:0015629">
    <property type="term" value="C:actin cytoskeleton"/>
    <property type="evidence" value="ECO:0000318"/>
    <property type="project" value="GO_Central"/>
</dbReference>
<dbReference type="GO" id="GO:0005856">
    <property type="term" value="C:cytoskeleton"/>
    <property type="evidence" value="ECO:0000250"/>
    <property type="project" value="WormBase"/>
</dbReference>
<dbReference type="GO" id="GO:0045121">
    <property type="term" value="C:membrane raft"/>
    <property type="evidence" value="ECO:0007005"/>
    <property type="project" value="WormBase"/>
</dbReference>
<dbReference type="GO" id="GO:0005865">
    <property type="term" value="C:striated muscle thin filament"/>
    <property type="evidence" value="ECO:0000314"/>
    <property type="project" value="WormBase"/>
</dbReference>
<dbReference type="GO" id="GO:0005524">
    <property type="term" value="F:ATP binding"/>
    <property type="evidence" value="ECO:0007669"/>
    <property type="project" value="UniProtKB-KW"/>
</dbReference>
<dbReference type="GO" id="GO:0016787">
    <property type="term" value="F:hydrolase activity"/>
    <property type="evidence" value="ECO:0007669"/>
    <property type="project" value="UniProtKB-KW"/>
</dbReference>
<dbReference type="GO" id="GO:0005200">
    <property type="term" value="F:structural constituent of cytoskeleton"/>
    <property type="evidence" value="ECO:0000250"/>
    <property type="project" value="WormBase"/>
</dbReference>
<dbReference type="GO" id="GO:0030036">
    <property type="term" value="P:actin cytoskeleton organization"/>
    <property type="evidence" value="ECO:0000250"/>
    <property type="project" value="WormBase"/>
</dbReference>
<dbReference type="GO" id="GO:0000281">
    <property type="term" value="P:mitotic cytokinesis"/>
    <property type="evidence" value="ECO:0000318"/>
    <property type="project" value="GO_Central"/>
</dbReference>
<dbReference type="CDD" id="cd10224">
    <property type="entry name" value="ASKHA_NBD_actin"/>
    <property type="match status" value="1"/>
</dbReference>
<dbReference type="FunFam" id="3.30.420.40:FF:000131">
    <property type="entry name" value="Actin, alpha skeletal muscle"/>
    <property type="match status" value="1"/>
</dbReference>
<dbReference type="FunFam" id="3.30.420.40:FF:000291">
    <property type="entry name" value="Actin, alpha skeletal muscle"/>
    <property type="match status" value="1"/>
</dbReference>
<dbReference type="FunFam" id="3.90.640.10:FF:000047">
    <property type="entry name" value="Actin, alpha skeletal muscle"/>
    <property type="match status" value="1"/>
</dbReference>
<dbReference type="FunFam" id="3.30.420.40:FF:000058">
    <property type="entry name" value="Putative actin-related protein 5"/>
    <property type="match status" value="1"/>
</dbReference>
<dbReference type="Gene3D" id="3.30.420.40">
    <property type="match status" value="2"/>
</dbReference>
<dbReference type="Gene3D" id="3.90.640.10">
    <property type="entry name" value="Actin, Chain A, domain 4"/>
    <property type="match status" value="1"/>
</dbReference>
<dbReference type="InterPro" id="IPR004000">
    <property type="entry name" value="Actin"/>
</dbReference>
<dbReference type="InterPro" id="IPR020902">
    <property type="entry name" value="Actin/actin-like_CS"/>
</dbReference>
<dbReference type="InterPro" id="IPR004001">
    <property type="entry name" value="Actin_CS"/>
</dbReference>
<dbReference type="InterPro" id="IPR043129">
    <property type="entry name" value="ATPase_NBD"/>
</dbReference>
<dbReference type="PANTHER" id="PTHR11937">
    <property type="entry name" value="ACTIN"/>
    <property type="match status" value="1"/>
</dbReference>
<dbReference type="Pfam" id="PF00022">
    <property type="entry name" value="Actin"/>
    <property type="match status" value="1"/>
</dbReference>
<dbReference type="PRINTS" id="PR00190">
    <property type="entry name" value="ACTIN"/>
</dbReference>
<dbReference type="SMART" id="SM00268">
    <property type="entry name" value="ACTIN"/>
    <property type="match status" value="1"/>
</dbReference>
<dbReference type="SUPFAM" id="SSF53067">
    <property type="entry name" value="Actin-like ATPase domain"/>
    <property type="match status" value="2"/>
</dbReference>
<dbReference type="PROSITE" id="PS00406">
    <property type="entry name" value="ACTINS_1"/>
    <property type="match status" value="1"/>
</dbReference>
<dbReference type="PROSITE" id="PS00432">
    <property type="entry name" value="ACTINS_2"/>
    <property type="match status" value="1"/>
</dbReference>
<dbReference type="PROSITE" id="PS01132">
    <property type="entry name" value="ACTINS_ACT_LIKE"/>
    <property type="match status" value="1"/>
</dbReference>
<gene>
    <name type="primary">act-4</name>
    <name type="ORF">M03F4.2</name>
</gene>
<sequence length="376" mass="41778">MCDDEVAALVVDNGSGMCKAGFAGDDAPRAVFPSIVGRPRHQGVMVGMGQKDSYVGDEAQSKRGILTLKYPIEHGIVTNWDDMEKIWHHTFYNELRVAPEEHPVLLTEAPLNPKANREKMTQIMFETFNTPAMYVAIQAVLSLYASGRTTGVVLDSGDGVTHTVPIYEGYALPHAILRLDLAGRDLTDYLMKILTERGYSFTTTAEREIVRDIKEKLCYVALDFEQEMATAASSSSLEKSYELPDGQVITVGNERFRCPEALFQPSFLGMESAGIHETSYNSIMKCDIDIRKDLYANTVLSGGTTMYPGIADRMQKEITALAPSTMKIKIIAPPERKYSVWIGGSILASLSTFQQMWISKQEYDESGPSIVHRKCF</sequence>
<keyword id="KW-0007">Acetylation</keyword>
<keyword id="KW-0067">ATP-binding</keyword>
<keyword id="KW-0963">Cytoplasm</keyword>
<keyword id="KW-0206">Cytoskeleton</keyword>
<keyword id="KW-0378">Hydrolase</keyword>
<keyword id="KW-0547">Nucleotide-binding</keyword>
<keyword id="KW-1185">Reference proteome</keyword>
<accession>P10986</accession>
<accession>Q7YSY2</accession>
<organism>
    <name type="scientific">Caenorhabditis elegans</name>
    <dbReference type="NCBI Taxonomy" id="6239"/>
    <lineage>
        <taxon>Eukaryota</taxon>
        <taxon>Metazoa</taxon>
        <taxon>Ecdysozoa</taxon>
        <taxon>Nematoda</taxon>
        <taxon>Chromadorea</taxon>
        <taxon>Rhabditida</taxon>
        <taxon>Rhabditina</taxon>
        <taxon>Rhabditomorpha</taxon>
        <taxon>Rhabditoidea</taxon>
        <taxon>Rhabditidae</taxon>
        <taxon>Peloderinae</taxon>
        <taxon>Caenorhabditis</taxon>
    </lineage>
</organism>
<feature type="propeptide" id="PRO_0000000654" description="Removed in mature form" evidence="1">
    <location>
        <begin position="1"/>
        <end position="2"/>
    </location>
</feature>
<feature type="chain" id="PRO_0000000655" description="Actin-4">
    <location>
        <begin position="3"/>
        <end position="376"/>
    </location>
</feature>
<feature type="modified residue" description="N-acetylaspartate" evidence="1">
    <location>
        <position position="3"/>
    </location>
</feature>
<feature type="sequence conflict" description="In Ref. 3; AAA27890." evidence="4" ref="3">
    <original>E</original>
    <variation>D</variation>
    <location>
        <position position="5"/>
    </location>
</feature>